<comment type="function">
    <text evidence="1">Catalyzes the adenylation by ATP of the carboxyl group of the C-terminal glycine of sulfur carrier protein ThiS.</text>
</comment>
<comment type="catalytic activity">
    <reaction>
        <text>[ThiS sulfur-carrier protein]-C-terminal Gly-Gly + ATP + H(+) = [ThiS sulfur-carrier protein]-C-terminal Gly-Gly-AMP + diphosphate</text>
        <dbReference type="Rhea" id="RHEA:43344"/>
        <dbReference type="Rhea" id="RHEA-COMP:12909"/>
        <dbReference type="Rhea" id="RHEA-COMP:12910"/>
        <dbReference type="ChEBI" id="CHEBI:15378"/>
        <dbReference type="ChEBI" id="CHEBI:30616"/>
        <dbReference type="ChEBI" id="CHEBI:33019"/>
        <dbReference type="ChEBI" id="CHEBI:90618"/>
        <dbReference type="ChEBI" id="CHEBI:90778"/>
        <dbReference type="EC" id="2.7.7.73"/>
    </reaction>
</comment>
<comment type="cofactor">
    <cofactor evidence="1">
        <name>Zn(2+)</name>
        <dbReference type="ChEBI" id="CHEBI:29105"/>
    </cofactor>
    <text evidence="1">Binds 1 zinc ion per subunit.</text>
</comment>
<comment type="pathway">
    <text>Cofactor biosynthesis; thiamine diphosphate biosynthesis.</text>
</comment>
<comment type="similarity">
    <text evidence="2">Belongs to the HesA/MoeB/ThiF family.</text>
</comment>
<protein>
    <recommendedName>
        <fullName>Sulfur carrier protein ThiS adenylyltransferase</fullName>
        <ecNumber>2.7.7.73</ecNumber>
    </recommendedName>
</protein>
<gene>
    <name type="primary">thiF</name>
    <name type="synonym">yjbU</name>
    <name type="ordered locus">BSU11700</name>
</gene>
<accession>O31619</accession>
<feature type="chain" id="PRO_0000391752" description="Sulfur carrier protein ThiS adenylyltransferase">
    <location>
        <begin position="1"/>
        <end position="336"/>
    </location>
</feature>
<feature type="active site" description="Glycyl persulfide ester intermediate" evidence="1">
    <location>
        <position position="181"/>
    </location>
</feature>
<feature type="binding site" evidence="1">
    <location>
        <position position="7"/>
    </location>
    <ligand>
        <name>ATP</name>
        <dbReference type="ChEBI" id="CHEBI:30616"/>
    </ligand>
</feature>
<feature type="binding site" evidence="1">
    <location>
        <position position="34"/>
    </location>
    <ligand>
        <name>ATP</name>
        <dbReference type="ChEBI" id="CHEBI:30616"/>
    </ligand>
</feature>
<feature type="binding site" evidence="1">
    <location>
        <position position="55"/>
    </location>
    <ligand>
        <name>ATP</name>
        <dbReference type="ChEBI" id="CHEBI:30616"/>
    </ligand>
</feature>
<feature type="binding site" evidence="1">
    <location>
        <position position="66"/>
    </location>
    <ligand>
        <name>ATP</name>
        <dbReference type="ChEBI" id="CHEBI:30616"/>
    </ligand>
</feature>
<feature type="binding site" evidence="1">
    <location>
        <position position="81"/>
    </location>
    <ligand>
        <name>ATP</name>
        <dbReference type="ChEBI" id="CHEBI:30616"/>
    </ligand>
</feature>
<feature type="binding site" evidence="1">
    <location>
        <position position="105"/>
    </location>
    <ligand>
        <name>ATP</name>
        <dbReference type="ChEBI" id="CHEBI:30616"/>
    </ligand>
</feature>
<feature type="binding site" evidence="1">
    <location>
        <begin position="125"/>
        <end position="129"/>
    </location>
    <ligand>
        <name>ATP</name>
        <dbReference type="ChEBI" id="CHEBI:30616"/>
    </ligand>
</feature>
<feature type="binding site" evidence="1">
    <location>
        <position position="166"/>
    </location>
    <ligand>
        <name>Zn(2+)</name>
        <dbReference type="ChEBI" id="CHEBI:29105"/>
    </ligand>
</feature>
<feature type="binding site" evidence="1">
    <location>
        <position position="169"/>
    </location>
    <ligand>
        <name>Zn(2+)</name>
        <dbReference type="ChEBI" id="CHEBI:29105"/>
    </ligand>
</feature>
<feature type="binding site" evidence="1">
    <location>
        <position position="238"/>
    </location>
    <ligand>
        <name>Zn(2+)</name>
        <dbReference type="ChEBI" id="CHEBI:29105"/>
    </ligand>
</feature>
<feature type="binding site" evidence="1">
    <location>
        <position position="241"/>
    </location>
    <ligand>
        <name>Zn(2+)</name>
        <dbReference type="ChEBI" id="CHEBI:29105"/>
    </ligand>
</feature>
<proteinExistence type="inferred from homology"/>
<keyword id="KW-0067">ATP-binding</keyword>
<keyword id="KW-0479">Metal-binding</keyword>
<keyword id="KW-0547">Nucleotide-binding</keyword>
<keyword id="KW-0548">Nucleotidyltransferase</keyword>
<keyword id="KW-1185">Reference proteome</keyword>
<keyword id="KW-0784">Thiamine biosynthesis</keyword>
<keyword id="KW-0808">Transferase</keyword>
<keyword id="KW-0862">Zinc</keyword>
<reference key="1">
    <citation type="journal article" date="1997" name="Nature">
        <title>The complete genome sequence of the Gram-positive bacterium Bacillus subtilis.</title>
        <authorList>
            <person name="Kunst F."/>
            <person name="Ogasawara N."/>
            <person name="Moszer I."/>
            <person name="Albertini A.M."/>
            <person name="Alloni G."/>
            <person name="Azevedo V."/>
            <person name="Bertero M.G."/>
            <person name="Bessieres P."/>
            <person name="Bolotin A."/>
            <person name="Borchert S."/>
            <person name="Borriss R."/>
            <person name="Boursier L."/>
            <person name="Brans A."/>
            <person name="Braun M."/>
            <person name="Brignell S.C."/>
            <person name="Bron S."/>
            <person name="Brouillet S."/>
            <person name="Bruschi C.V."/>
            <person name="Caldwell B."/>
            <person name="Capuano V."/>
            <person name="Carter N.M."/>
            <person name="Choi S.-K."/>
            <person name="Codani J.-J."/>
            <person name="Connerton I.F."/>
            <person name="Cummings N.J."/>
            <person name="Daniel R.A."/>
            <person name="Denizot F."/>
            <person name="Devine K.M."/>
            <person name="Duesterhoeft A."/>
            <person name="Ehrlich S.D."/>
            <person name="Emmerson P.T."/>
            <person name="Entian K.-D."/>
            <person name="Errington J."/>
            <person name="Fabret C."/>
            <person name="Ferrari E."/>
            <person name="Foulger D."/>
            <person name="Fritz C."/>
            <person name="Fujita M."/>
            <person name="Fujita Y."/>
            <person name="Fuma S."/>
            <person name="Galizzi A."/>
            <person name="Galleron N."/>
            <person name="Ghim S.-Y."/>
            <person name="Glaser P."/>
            <person name="Goffeau A."/>
            <person name="Golightly E.J."/>
            <person name="Grandi G."/>
            <person name="Guiseppi G."/>
            <person name="Guy B.J."/>
            <person name="Haga K."/>
            <person name="Haiech J."/>
            <person name="Harwood C.R."/>
            <person name="Henaut A."/>
            <person name="Hilbert H."/>
            <person name="Holsappel S."/>
            <person name="Hosono S."/>
            <person name="Hullo M.-F."/>
            <person name="Itaya M."/>
            <person name="Jones L.-M."/>
            <person name="Joris B."/>
            <person name="Karamata D."/>
            <person name="Kasahara Y."/>
            <person name="Klaerr-Blanchard M."/>
            <person name="Klein C."/>
            <person name="Kobayashi Y."/>
            <person name="Koetter P."/>
            <person name="Koningstein G."/>
            <person name="Krogh S."/>
            <person name="Kumano M."/>
            <person name="Kurita K."/>
            <person name="Lapidus A."/>
            <person name="Lardinois S."/>
            <person name="Lauber J."/>
            <person name="Lazarevic V."/>
            <person name="Lee S.-M."/>
            <person name="Levine A."/>
            <person name="Liu H."/>
            <person name="Masuda S."/>
            <person name="Mauel C."/>
            <person name="Medigue C."/>
            <person name="Medina N."/>
            <person name="Mellado R.P."/>
            <person name="Mizuno M."/>
            <person name="Moestl D."/>
            <person name="Nakai S."/>
            <person name="Noback M."/>
            <person name="Noone D."/>
            <person name="O'Reilly M."/>
            <person name="Ogawa K."/>
            <person name="Ogiwara A."/>
            <person name="Oudega B."/>
            <person name="Park S.-H."/>
            <person name="Parro V."/>
            <person name="Pohl T.M."/>
            <person name="Portetelle D."/>
            <person name="Porwollik S."/>
            <person name="Prescott A.M."/>
            <person name="Presecan E."/>
            <person name="Pujic P."/>
            <person name="Purnelle B."/>
            <person name="Rapoport G."/>
            <person name="Rey M."/>
            <person name="Reynolds S."/>
            <person name="Rieger M."/>
            <person name="Rivolta C."/>
            <person name="Rocha E."/>
            <person name="Roche B."/>
            <person name="Rose M."/>
            <person name="Sadaie Y."/>
            <person name="Sato T."/>
            <person name="Scanlan E."/>
            <person name="Schleich S."/>
            <person name="Schroeter R."/>
            <person name="Scoffone F."/>
            <person name="Sekiguchi J."/>
            <person name="Sekowska A."/>
            <person name="Seror S.J."/>
            <person name="Serror P."/>
            <person name="Shin B.-S."/>
            <person name="Soldo B."/>
            <person name="Sorokin A."/>
            <person name="Tacconi E."/>
            <person name="Takagi T."/>
            <person name="Takahashi H."/>
            <person name="Takemaru K."/>
            <person name="Takeuchi M."/>
            <person name="Tamakoshi A."/>
            <person name="Tanaka T."/>
            <person name="Terpstra P."/>
            <person name="Tognoni A."/>
            <person name="Tosato V."/>
            <person name="Uchiyama S."/>
            <person name="Vandenbol M."/>
            <person name="Vannier F."/>
            <person name="Vassarotti A."/>
            <person name="Viari A."/>
            <person name="Wambutt R."/>
            <person name="Wedler E."/>
            <person name="Wedler H."/>
            <person name="Weitzenegger T."/>
            <person name="Winters P."/>
            <person name="Wipat A."/>
            <person name="Yamamoto H."/>
            <person name="Yamane K."/>
            <person name="Yasumoto K."/>
            <person name="Yata K."/>
            <person name="Yoshida K."/>
            <person name="Yoshikawa H.-F."/>
            <person name="Zumstein E."/>
            <person name="Yoshikawa H."/>
            <person name="Danchin A."/>
        </authorList>
    </citation>
    <scope>NUCLEOTIDE SEQUENCE [LARGE SCALE GENOMIC DNA]</scope>
    <source>
        <strain>168</strain>
    </source>
</reference>
<dbReference type="EC" id="2.7.7.73"/>
<dbReference type="EMBL" id="AL009126">
    <property type="protein sequence ID" value="CAB13027.1"/>
    <property type="molecule type" value="Genomic_DNA"/>
</dbReference>
<dbReference type="PIR" id="E69845">
    <property type="entry name" value="E69845"/>
</dbReference>
<dbReference type="RefSeq" id="NP_389052.1">
    <property type="nucleotide sequence ID" value="NC_000964.3"/>
</dbReference>
<dbReference type="RefSeq" id="WP_003245868.1">
    <property type="nucleotide sequence ID" value="NZ_OZ025638.1"/>
</dbReference>
<dbReference type="SMR" id="O31619"/>
<dbReference type="FunCoup" id="O31619">
    <property type="interactions" value="667"/>
</dbReference>
<dbReference type="IntAct" id="O31619">
    <property type="interactions" value="1"/>
</dbReference>
<dbReference type="MINT" id="O31619"/>
<dbReference type="STRING" id="224308.BSU11700"/>
<dbReference type="PaxDb" id="224308-BSU11700"/>
<dbReference type="EnsemblBacteria" id="CAB13027">
    <property type="protein sequence ID" value="CAB13027"/>
    <property type="gene ID" value="BSU_11700"/>
</dbReference>
<dbReference type="GeneID" id="939816"/>
<dbReference type="KEGG" id="bsu:BSU11700"/>
<dbReference type="PATRIC" id="fig|224308.179.peg.1259"/>
<dbReference type="eggNOG" id="COG0476">
    <property type="taxonomic scope" value="Bacteria"/>
</dbReference>
<dbReference type="InParanoid" id="O31619"/>
<dbReference type="OrthoDB" id="9804286at2"/>
<dbReference type="PhylomeDB" id="O31619"/>
<dbReference type="BioCyc" id="BSUB:BSU11700-MONOMER"/>
<dbReference type="BioCyc" id="MetaCyc:BSU11700-MONOMER"/>
<dbReference type="BRENDA" id="2.7.7.73">
    <property type="organism ID" value="658"/>
</dbReference>
<dbReference type="UniPathway" id="UPA00060"/>
<dbReference type="Proteomes" id="UP000001570">
    <property type="component" value="Chromosome"/>
</dbReference>
<dbReference type="GO" id="GO:0005737">
    <property type="term" value="C:cytoplasm"/>
    <property type="evidence" value="ECO:0000318"/>
    <property type="project" value="GO_Central"/>
</dbReference>
<dbReference type="GO" id="GO:0005829">
    <property type="term" value="C:cytosol"/>
    <property type="evidence" value="ECO:0000318"/>
    <property type="project" value="GO_Central"/>
</dbReference>
<dbReference type="GO" id="GO:0005524">
    <property type="term" value="F:ATP binding"/>
    <property type="evidence" value="ECO:0007669"/>
    <property type="project" value="UniProtKB-KW"/>
</dbReference>
<dbReference type="GO" id="GO:0046872">
    <property type="term" value="F:metal ion binding"/>
    <property type="evidence" value="ECO:0007669"/>
    <property type="project" value="UniProtKB-KW"/>
</dbReference>
<dbReference type="GO" id="GO:0016779">
    <property type="term" value="F:nucleotidyltransferase activity"/>
    <property type="evidence" value="ECO:0000318"/>
    <property type="project" value="GO_Central"/>
</dbReference>
<dbReference type="GO" id="GO:0008146">
    <property type="term" value="F:sulfotransferase activity"/>
    <property type="evidence" value="ECO:0000318"/>
    <property type="project" value="GO_Central"/>
</dbReference>
<dbReference type="GO" id="GO:0004792">
    <property type="term" value="F:thiosulfate-cyanide sulfurtransferase activity"/>
    <property type="evidence" value="ECO:0000318"/>
    <property type="project" value="GO_Central"/>
</dbReference>
<dbReference type="GO" id="GO:0008641">
    <property type="term" value="F:ubiquitin-like modifier activating enzyme activity"/>
    <property type="evidence" value="ECO:0007669"/>
    <property type="project" value="InterPro"/>
</dbReference>
<dbReference type="GO" id="GO:0009228">
    <property type="term" value="P:thiamine biosynthetic process"/>
    <property type="evidence" value="ECO:0007669"/>
    <property type="project" value="UniProtKB-KW"/>
</dbReference>
<dbReference type="GO" id="GO:0009229">
    <property type="term" value="P:thiamine diphosphate biosynthetic process"/>
    <property type="evidence" value="ECO:0007669"/>
    <property type="project" value="UniProtKB-UniPathway"/>
</dbReference>
<dbReference type="CDD" id="cd00757">
    <property type="entry name" value="ThiF_MoeB_HesA_family"/>
    <property type="match status" value="1"/>
</dbReference>
<dbReference type="FunFam" id="3.40.50.720:FF:000080">
    <property type="entry name" value="Thiazole biosynthesis adenylyltransferase ThiF"/>
    <property type="match status" value="1"/>
</dbReference>
<dbReference type="Gene3D" id="3.40.50.720">
    <property type="entry name" value="NAD(P)-binding Rossmann-like Domain"/>
    <property type="match status" value="1"/>
</dbReference>
<dbReference type="InterPro" id="IPR045886">
    <property type="entry name" value="ThiF/MoeB/HesA"/>
</dbReference>
<dbReference type="InterPro" id="IPR000594">
    <property type="entry name" value="ThiF_NAD_FAD-bd"/>
</dbReference>
<dbReference type="InterPro" id="IPR035985">
    <property type="entry name" value="Ubiquitin-activating_enz"/>
</dbReference>
<dbReference type="PANTHER" id="PTHR10953:SF102">
    <property type="entry name" value="ADENYLYLTRANSFERASE AND SULFURTRANSFERASE MOCS3"/>
    <property type="match status" value="1"/>
</dbReference>
<dbReference type="PANTHER" id="PTHR10953">
    <property type="entry name" value="UBIQUITIN-ACTIVATING ENZYME E1"/>
    <property type="match status" value="1"/>
</dbReference>
<dbReference type="Pfam" id="PF00899">
    <property type="entry name" value="ThiF"/>
    <property type="match status" value="1"/>
</dbReference>
<dbReference type="SUPFAM" id="SSF69572">
    <property type="entry name" value="Activating enzymes of the ubiquitin-like proteins"/>
    <property type="match status" value="1"/>
</dbReference>
<organism>
    <name type="scientific">Bacillus subtilis (strain 168)</name>
    <dbReference type="NCBI Taxonomy" id="224308"/>
    <lineage>
        <taxon>Bacteria</taxon>
        <taxon>Bacillati</taxon>
        <taxon>Bacillota</taxon>
        <taxon>Bacilli</taxon>
        <taxon>Bacillales</taxon>
        <taxon>Bacillaceae</taxon>
        <taxon>Bacillus</taxon>
    </lineage>
</organism>
<name>THIF_BACSU</name>
<sequence>MTGRYSRQELFAPIGPSGQKKLKEARAVIIGAGALGTASAEMLVRAGVGSVKIADRDYVEWSNLQRQQLYTEDDVKKEMPKAAAAERRLRSINSDVDVTGLVMDVTAENIFELIRDASIIVDAADNFETRLIVNDAAVKEGIPFLYGACVGSYGLTFTVVPGSTPCLHCLLDALPIGGATCDTAGIISPAVLQVAVFQVTDALKLLTGEECEPVLRSFDLWKNERSEVRAASLKHDACPSCGTKDFPFLSYENQTKAAVLCGRNTVQIRSSITKEADLEALAGQLRQAGLEVAANPYLISCRSDDMKMVLFRDGRALIHGTNDIARAKSIYHKWIG</sequence>
<evidence type="ECO:0000250" key="1"/>
<evidence type="ECO:0000305" key="2"/>